<evidence type="ECO:0000255" key="1">
    <source>
        <dbReference type="HAMAP-Rule" id="MF_00051"/>
    </source>
</evidence>
<comment type="function">
    <text evidence="1">Catalyzes the reversible interconversion of serine and glycine with tetrahydrofolate (THF) serving as the one-carbon carrier. This reaction serves as the major source of one-carbon groups required for the biosynthesis of purines, thymidylate, methionine, and other important biomolecules. Also exhibits THF-independent aldolase activity toward beta-hydroxyamino acids, producing glycine and aldehydes, via a retro-aldol mechanism.</text>
</comment>
<comment type="catalytic activity">
    <reaction evidence="1">
        <text>(6R)-5,10-methylene-5,6,7,8-tetrahydrofolate + glycine + H2O = (6S)-5,6,7,8-tetrahydrofolate + L-serine</text>
        <dbReference type="Rhea" id="RHEA:15481"/>
        <dbReference type="ChEBI" id="CHEBI:15377"/>
        <dbReference type="ChEBI" id="CHEBI:15636"/>
        <dbReference type="ChEBI" id="CHEBI:33384"/>
        <dbReference type="ChEBI" id="CHEBI:57305"/>
        <dbReference type="ChEBI" id="CHEBI:57453"/>
        <dbReference type="EC" id="2.1.2.1"/>
    </reaction>
</comment>
<comment type="cofactor">
    <cofactor evidence="1">
        <name>pyridoxal 5'-phosphate</name>
        <dbReference type="ChEBI" id="CHEBI:597326"/>
    </cofactor>
</comment>
<comment type="pathway">
    <text evidence="1">One-carbon metabolism; tetrahydrofolate interconversion.</text>
</comment>
<comment type="pathway">
    <text evidence="1">Amino-acid biosynthesis; glycine biosynthesis; glycine from L-serine: step 1/1.</text>
</comment>
<comment type="subunit">
    <text evidence="1">Homodimer.</text>
</comment>
<comment type="subcellular location">
    <subcellularLocation>
        <location evidence="1">Cytoplasm</location>
    </subcellularLocation>
</comment>
<comment type="similarity">
    <text evidence="1">Belongs to the SHMT family.</text>
</comment>
<protein>
    <recommendedName>
        <fullName evidence="1">Serine hydroxymethyltransferase</fullName>
        <shortName evidence="1">SHMT</shortName>
        <shortName evidence="1">Serine methylase</shortName>
        <ecNumber evidence="1">2.1.2.1</ecNumber>
    </recommendedName>
</protein>
<sequence>MNFEHISREDNEIYALIEKELERQQNGIELIASENVASEAVMEAMGSYLTNKYAEGYPGKRYYGGCYVVDGVEEIARERAKELFGAEHANVQPHSGSQANMAVYFTILEHGDTVLGMDLSHGGHLTHGSPVNFSGKLFNFVSYGVDKETEEINYDVVRELAIKHKPKLIVAGASAYSRIIDFKKFREICDEIGAYLMVDMAHIAGLVAAGLHPSPVPYADFVTSTTHKTLRGPRGGLILCKEKYAKDLDKNIFPGMQGGPLMHIIAAKAVCFKEALDPSFKEYMARVVENCKELGEQLVKRGFKLVSNGTDNHLILVDLNNKDITGKDAEKLLDEVGITLNKNTVPNETRSPFVTSGVRIGTAAITTRGFERKDMEEIADIINETIINRDKDLEKYKQRVKALCEKYPLYK</sequence>
<reference key="1">
    <citation type="submission" date="2008-05" db="EMBL/GenBank/DDBJ databases">
        <title>Complete genome sequence of Clostridium botulinum E3 str. Alaska E43.</title>
        <authorList>
            <person name="Brinkac L.M."/>
            <person name="Brown J.L."/>
            <person name="Bruce D."/>
            <person name="Detter C."/>
            <person name="Munk C."/>
            <person name="Smith L.A."/>
            <person name="Smith T.J."/>
            <person name="Sutton G."/>
            <person name="Brettin T.S."/>
        </authorList>
    </citation>
    <scope>NUCLEOTIDE SEQUENCE [LARGE SCALE GENOMIC DNA]</scope>
    <source>
        <strain>Alaska E43 / Type E3</strain>
    </source>
</reference>
<feature type="chain" id="PRO_1000091529" description="Serine hydroxymethyltransferase">
    <location>
        <begin position="1"/>
        <end position="411"/>
    </location>
</feature>
<feature type="binding site" evidence="1">
    <location>
        <position position="119"/>
    </location>
    <ligand>
        <name>(6S)-5,6,7,8-tetrahydrofolate</name>
        <dbReference type="ChEBI" id="CHEBI:57453"/>
    </ligand>
</feature>
<feature type="binding site" evidence="1">
    <location>
        <begin position="123"/>
        <end position="125"/>
    </location>
    <ligand>
        <name>(6S)-5,6,7,8-tetrahydrofolate</name>
        <dbReference type="ChEBI" id="CHEBI:57453"/>
    </ligand>
</feature>
<feature type="binding site" evidence="1">
    <location>
        <begin position="351"/>
        <end position="353"/>
    </location>
    <ligand>
        <name>(6S)-5,6,7,8-tetrahydrofolate</name>
        <dbReference type="ChEBI" id="CHEBI:57453"/>
    </ligand>
</feature>
<feature type="site" description="Plays an important role in substrate specificity" evidence="1">
    <location>
        <position position="227"/>
    </location>
</feature>
<feature type="modified residue" description="N6-(pyridoxal phosphate)lysine" evidence="1">
    <location>
        <position position="228"/>
    </location>
</feature>
<gene>
    <name evidence="1" type="primary">glyA</name>
    <name type="ordered locus">CLH_1018</name>
</gene>
<dbReference type="EC" id="2.1.2.1" evidence="1"/>
<dbReference type="EMBL" id="CP001078">
    <property type="protein sequence ID" value="ACD52519.1"/>
    <property type="molecule type" value="Genomic_DNA"/>
</dbReference>
<dbReference type="RefSeq" id="WP_012450647.1">
    <property type="nucleotide sequence ID" value="NC_010723.1"/>
</dbReference>
<dbReference type="SMR" id="B2V398"/>
<dbReference type="KEGG" id="cbt:CLH_1018"/>
<dbReference type="HOGENOM" id="CLU_022477_2_1_9"/>
<dbReference type="UniPathway" id="UPA00193"/>
<dbReference type="UniPathway" id="UPA00288">
    <property type="reaction ID" value="UER01023"/>
</dbReference>
<dbReference type="GO" id="GO:0005829">
    <property type="term" value="C:cytosol"/>
    <property type="evidence" value="ECO:0007669"/>
    <property type="project" value="TreeGrafter"/>
</dbReference>
<dbReference type="GO" id="GO:0004372">
    <property type="term" value="F:glycine hydroxymethyltransferase activity"/>
    <property type="evidence" value="ECO:0007669"/>
    <property type="project" value="UniProtKB-UniRule"/>
</dbReference>
<dbReference type="GO" id="GO:0030170">
    <property type="term" value="F:pyridoxal phosphate binding"/>
    <property type="evidence" value="ECO:0007669"/>
    <property type="project" value="UniProtKB-UniRule"/>
</dbReference>
<dbReference type="GO" id="GO:0019264">
    <property type="term" value="P:glycine biosynthetic process from serine"/>
    <property type="evidence" value="ECO:0007669"/>
    <property type="project" value="UniProtKB-UniRule"/>
</dbReference>
<dbReference type="GO" id="GO:0035999">
    <property type="term" value="P:tetrahydrofolate interconversion"/>
    <property type="evidence" value="ECO:0007669"/>
    <property type="project" value="UniProtKB-UniRule"/>
</dbReference>
<dbReference type="CDD" id="cd00378">
    <property type="entry name" value="SHMT"/>
    <property type="match status" value="1"/>
</dbReference>
<dbReference type="FunFam" id="3.40.640.10:FF:000001">
    <property type="entry name" value="Serine hydroxymethyltransferase"/>
    <property type="match status" value="1"/>
</dbReference>
<dbReference type="FunFam" id="3.90.1150.10:FF:000003">
    <property type="entry name" value="Serine hydroxymethyltransferase"/>
    <property type="match status" value="1"/>
</dbReference>
<dbReference type="Gene3D" id="3.90.1150.10">
    <property type="entry name" value="Aspartate Aminotransferase, domain 1"/>
    <property type="match status" value="1"/>
</dbReference>
<dbReference type="Gene3D" id="3.40.640.10">
    <property type="entry name" value="Type I PLP-dependent aspartate aminotransferase-like (Major domain)"/>
    <property type="match status" value="1"/>
</dbReference>
<dbReference type="HAMAP" id="MF_00051">
    <property type="entry name" value="SHMT"/>
    <property type="match status" value="1"/>
</dbReference>
<dbReference type="InterPro" id="IPR015424">
    <property type="entry name" value="PyrdxlP-dep_Trfase"/>
</dbReference>
<dbReference type="InterPro" id="IPR015421">
    <property type="entry name" value="PyrdxlP-dep_Trfase_major"/>
</dbReference>
<dbReference type="InterPro" id="IPR015422">
    <property type="entry name" value="PyrdxlP-dep_Trfase_small"/>
</dbReference>
<dbReference type="InterPro" id="IPR001085">
    <property type="entry name" value="Ser_HO-MeTrfase"/>
</dbReference>
<dbReference type="InterPro" id="IPR049943">
    <property type="entry name" value="Ser_HO-MeTrfase-like"/>
</dbReference>
<dbReference type="InterPro" id="IPR019798">
    <property type="entry name" value="Ser_HO-MeTrfase_PLP_BS"/>
</dbReference>
<dbReference type="InterPro" id="IPR039429">
    <property type="entry name" value="SHMT-like_dom"/>
</dbReference>
<dbReference type="NCBIfam" id="NF000586">
    <property type="entry name" value="PRK00011.1"/>
    <property type="match status" value="1"/>
</dbReference>
<dbReference type="PANTHER" id="PTHR11680">
    <property type="entry name" value="SERINE HYDROXYMETHYLTRANSFERASE"/>
    <property type="match status" value="1"/>
</dbReference>
<dbReference type="PANTHER" id="PTHR11680:SF35">
    <property type="entry name" value="SERINE HYDROXYMETHYLTRANSFERASE 1"/>
    <property type="match status" value="1"/>
</dbReference>
<dbReference type="Pfam" id="PF00464">
    <property type="entry name" value="SHMT"/>
    <property type="match status" value="1"/>
</dbReference>
<dbReference type="PIRSF" id="PIRSF000412">
    <property type="entry name" value="SHMT"/>
    <property type="match status" value="1"/>
</dbReference>
<dbReference type="SUPFAM" id="SSF53383">
    <property type="entry name" value="PLP-dependent transferases"/>
    <property type="match status" value="1"/>
</dbReference>
<dbReference type="PROSITE" id="PS00096">
    <property type="entry name" value="SHMT"/>
    <property type="match status" value="1"/>
</dbReference>
<name>GLYA_CLOBA</name>
<proteinExistence type="inferred from homology"/>
<organism>
    <name type="scientific">Clostridium botulinum (strain Alaska E43 / Type E3)</name>
    <dbReference type="NCBI Taxonomy" id="508767"/>
    <lineage>
        <taxon>Bacteria</taxon>
        <taxon>Bacillati</taxon>
        <taxon>Bacillota</taxon>
        <taxon>Clostridia</taxon>
        <taxon>Eubacteriales</taxon>
        <taxon>Clostridiaceae</taxon>
        <taxon>Clostridium</taxon>
    </lineage>
</organism>
<keyword id="KW-0028">Amino-acid biosynthesis</keyword>
<keyword id="KW-0963">Cytoplasm</keyword>
<keyword id="KW-0554">One-carbon metabolism</keyword>
<keyword id="KW-0663">Pyridoxal phosphate</keyword>
<keyword id="KW-0808">Transferase</keyword>
<accession>B2V398</accession>